<comment type="function">
    <text evidence="1">Aldehyde decarbonylase involved in the conversion of aldehydes to alkanes. Core component of a very-long-chain alkane synthesis complex.</text>
</comment>
<comment type="catalytic activity">
    <reaction evidence="1">
        <text>a long-chain fatty aldehyde + 2 NADPH + O2 + H(+) = a long-chain alkane + formate + 2 NADP(+) + H2O</text>
        <dbReference type="Rhea" id="RHEA:21440"/>
        <dbReference type="ChEBI" id="CHEBI:15377"/>
        <dbReference type="ChEBI" id="CHEBI:15378"/>
        <dbReference type="ChEBI" id="CHEBI:15379"/>
        <dbReference type="ChEBI" id="CHEBI:15740"/>
        <dbReference type="ChEBI" id="CHEBI:17176"/>
        <dbReference type="ChEBI" id="CHEBI:57783"/>
        <dbReference type="ChEBI" id="CHEBI:58349"/>
        <dbReference type="ChEBI" id="CHEBI:83563"/>
        <dbReference type="EC" id="4.1.99.5"/>
    </reaction>
</comment>
<comment type="subunit">
    <text evidence="1">Homodimer.</text>
</comment>
<comment type="subcellular location">
    <subcellularLocation>
        <location evidence="1">Endoplasmic reticulum membrane</location>
        <topology evidence="1">Multi-pass membrane protein</topology>
    </subcellularLocation>
</comment>
<comment type="tissue specificity">
    <text evidence="3">Expressed in germinating seeds and stamens.</text>
</comment>
<comment type="induction">
    <text evidence="3">Induced by salt stress and abscisic acid (ABA).</text>
</comment>
<comment type="similarity">
    <text evidence="6">Belongs to the sterol desaturase family.</text>
</comment>
<comment type="sequence caution" evidence="6">
    <conflict type="erroneous gene model prediction">
        <sequence resource="EMBL-CDS" id="BAD37412"/>
    </conflict>
</comment>
<comment type="sequence caution" evidence="6">
    <conflict type="erroneous gene model prediction">
        <sequence resource="EMBL-CDS" id="BAF20151"/>
    </conflict>
</comment>
<comment type="sequence caution" evidence="6">
    <conflict type="erroneous gene model prediction">
        <sequence resource="EMBL-CDS" id="BAS98921"/>
    </conflict>
</comment>
<comment type="sequence caution" evidence="6">
    <conflict type="erroneous gene model prediction">
        <sequence resource="EMBL-CDS" id="EEE66138"/>
    </conflict>
</comment>
<reference key="1">
    <citation type="journal article" date="2005" name="Nature">
        <title>The map-based sequence of the rice genome.</title>
        <authorList>
            <consortium name="International rice genome sequencing project (IRGSP)"/>
        </authorList>
    </citation>
    <scope>NUCLEOTIDE SEQUENCE [LARGE SCALE GENOMIC DNA]</scope>
    <source>
        <strain>cv. Nipponbare</strain>
    </source>
</reference>
<reference key="2">
    <citation type="journal article" date="2008" name="Nucleic Acids Res.">
        <title>The rice annotation project database (RAP-DB): 2008 update.</title>
        <authorList>
            <consortium name="The rice annotation project (RAP)"/>
        </authorList>
    </citation>
    <scope>GENOME REANNOTATION</scope>
    <source>
        <strain>cv. Nipponbare</strain>
    </source>
</reference>
<reference key="3">
    <citation type="journal article" date="2013" name="Rice">
        <title>Improvement of the Oryza sativa Nipponbare reference genome using next generation sequence and optical map data.</title>
        <authorList>
            <person name="Kawahara Y."/>
            <person name="de la Bastide M."/>
            <person name="Hamilton J.P."/>
            <person name="Kanamori H."/>
            <person name="McCombie W.R."/>
            <person name="Ouyang S."/>
            <person name="Schwartz D.C."/>
            <person name="Tanaka T."/>
            <person name="Wu J."/>
            <person name="Zhou S."/>
            <person name="Childs K.L."/>
            <person name="Davidson R.M."/>
            <person name="Lin H."/>
            <person name="Quesada-Ocampo L."/>
            <person name="Vaillancourt B."/>
            <person name="Sakai H."/>
            <person name="Lee S.S."/>
            <person name="Kim J."/>
            <person name="Numa H."/>
            <person name="Itoh T."/>
            <person name="Buell C.R."/>
            <person name="Matsumoto T."/>
        </authorList>
    </citation>
    <scope>GENOME REANNOTATION</scope>
    <source>
        <strain>cv. Nipponbare</strain>
    </source>
</reference>
<reference key="4">
    <citation type="journal article" date="2005" name="PLoS Biol.">
        <title>The genomes of Oryza sativa: a history of duplications.</title>
        <authorList>
            <person name="Yu J."/>
            <person name="Wang J."/>
            <person name="Lin W."/>
            <person name="Li S."/>
            <person name="Li H."/>
            <person name="Zhou J."/>
            <person name="Ni P."/>
            <person name="Dong W."/>
            <person name="Hu S."/>
            <person name="Zeng C."/>
            <person name="Zhang J."/>
            <person name="Zhang Y."/>
            <person name="Li R."/>
            <person name="Xu Z."/>
            <person name="Li S."/>
            <person name="Li X."/>
            <person name="Zheng H."/>
            <person name="Cong L."/>
            <person name="Lin L."/>
            <person name="Yin J."/>
            <person name="Geng J."/>
            <person name="Li G."/>
            <person name="Shi J."/>
            <person name="Liu J."/>
            <person name="Lv H."/>
            <person name="Li J."/>
            <person name="Wang J."/>
            <person name="Deng Y."/>
            <person name="Ran L."/>
            <person name="Shi X."/>
            <person name="Wang X."/>
            <person name="Wu Q."/>
            <person name="Li C."/>
            <person name="Ren X."/>
            <person name="Wang J."/>
            <person name="Wang X."/>
            <person name="Li D."/>
            <person name="Liu D."/>
            <person name="Zhang X."/>
            <person name="Ji Z."/>
            <person name="Zhao W."/>
            <person name="Sun Y."/>
            <person name="Zhang Z."/>
            <person name="Bao J."/>
            <person name="Han Y."/>
            <person name="Dong L."/>
            <person name="Ji J."/>
            <person name="Chen P."/>
            <person name="Wu S."/>
            <person name="Liu J."/>
            <person name="Xiao Y."/>
            <person name="Bu D."/>
            <person name="Tan J."/>
            <person name="Yang L."/>
            <person name="Ye C."/>
            <person name="Zhang J."/>
            <person name="Xu J."/>
            <person name="Zhou Y."/>
            <person name="Yu Y."/>
            <person name="Zhang B."/>
            <person name="Zhuang S."/>
            <person name="Wei H."/>
            <person name="Liu B."/>
            <person name="Lei M."/>
            <person name="Yu H."/>
            <person name="Li Y."/>
            <person name="Xu H."/>
            <person name="Wei S."/>
            <person name="He X."/>
            <person name="Fang L."/>
            <person name="Zhang Z."/>
            <person name="Zhang Y."/>
            <person name="Huang X."/>
            <person name="Su Z."/>
            <person name="Tong W."/>
            <person name="Li J."/>
            <person name="Tong Z."/>
            <person name="Li S."/>
            <person name="Ye J."/>
            <person name="Wang L."/>
            <person name="Fang L."/>
            <person name="Lei T."/>
            <person name="Chen C.-S."/>
            <person name="Chen H.-C."/>
            <person name="Xu Z."/>
            <person name="Li H."/>
            <person name="Huang H."/>
            <person name="Zhang F."/>
            <person name="Xu H."/>
            <person name="Li N."/>
            <person name="Zhao C."/>
            <person name="Li S."/>
            <person name="Dong L."/>
            <person name="Huang Y."/>
            <person name="Li L."/>
            <person name="Xi Y."/>
            <person name="Qi Q."/>
            <person name="Li W."/>
            <person name="Zhang B."/>
            <person name="Hu W."/>
            <person name="Zhang Y."/>
            <person name="Tian X."/>
            <person name="Jiao Y."/>
            <person name="Liang X."/>
            <person name="Jin J."/>
            <person name="Gao L."/>
            <person name="Zheng W."/>
            <person name="Hao B."/>
            <person name="Liu S.-M."/>
            <person name="Wang W."/>
            <person name="Yuan L."/>
            <person name="Cao M."/>
            <person name="McDermott J."/>
            <person name="Samudrala R."/>
            <person name="Wang J."/>
            <person name="Wong G.K.-S."/>
            <person name="Yang H."/>
        </authorList>
    </citation>
    <scope>NUCLEOTIDE SEQUENCE [LARGE SCALE GENOMIC DNA]</scope>
    <source>
        <strain>cv. Nipponbare</strain>
    </source>
</reference>
<reference key="5">
    <citation type="journal article" date="1997" name="Plant Physiol.">
        <title>The glossy1 locus of maize and an epidermis-specific cDNA from Kleinia odora define a class of receptor-like proteins required for the normal accumulation of cuticular waxes.</title>
        <authorList>
            <person name="Hansen J.D."/>
            <person name="Pyee J."/>
            <person name="Xia Y."/>
            <person name="Wen T.-J."/>
            <person name="Robertson D.S."/>
            <person name="Kolattukudy P.E."/>
            <person name="Nikolau B.J."/>
            <person name="Schnable P.S."/>
        </authorList>
    </citation>
    <scope>NUCLEOTIDE SEQUENCE [MRNA] OF 63-618</scope>
    <source>
        <strain>cv. Nipponbare</strain>
    </source>
</reference>
<reference key="6">
    <citation type="journal article" date="2009" name="Plant Mol. Biol.">
        <title>Characterization of Glossy1-homologous genes in rice involved in leaf wax accumulation and drought resistance.</title>
        <authorList>
            <person name="Islam M.A."/>
            <person name="Du H."/>
            <person name="Ning J."/>
            <person name="Ye H."/>
            <person name="Xiong L."/>
        </authorList>
    </citation>
    <scope>TISSUE SPECIFICITY</scope>
    <scope>INDUCTION BY SALT STRESS AND ABSCISIC ACID</scope>
    <scope>GENE FAMILY</scope>
    <scope>NOMENCLATURE</scope>
</reference>
<name>GLO13_ORYSJ</name>
<organism>
    <name type="scientific">Oryza sativa subsp. japonica</name>
    <name type="common">Rice</name>
    <dbReference type="NCBI Taxonomy" id="39947"/>
    <lineage>
        <taxon>Eukaryota</taxon>
        <taxon>Viridiplantae</taxon>
        <taxon>Streptophyta</taxon>
        <taxon>Embryophyta</taxon>
        <taxon>Tracheophyta</taxon>
        <taxon>Spermatophyta</taxon>
        <taxon>Magnoliopsida</taxon>
        <taxon>Liliopsida</taxon>
        <taxon>Poales</taxon>
        <taxon>Poaceae</taxon>
        <taxon>BOP clade</taxon>
        <taxon>Oryzoideae</taxon>
        <taxon>Oryzeae</taxon>
        <taxon>Oryzinae</taxon>
        <taxon>Oryza</taxon>
        <taxon>Oryza sativa</taxon>
    </lineage>
</organism>
<gene>
    <name evidence="4" type="primary">GL1-3</name>
    <name evidence="5" type="synonym">GL1</name>
    <name evidence="6" type="ordered locus">LOC_Os06g44300</name>
    <name evidence="8" type="ordered locus">Os06g0653000</name>
    <name evidence="10" type="ORF">OsJ_22195</name>
    <name evidence="7" type="ORF">OSJNBa0085J13.13</name>
    <name evidence="9" type="ORF">OSNPB_060653000</name>
</gene>
<dbReference type="EC" id="4.1.99.5" evidence="1"/>
<dbReference type="EMBL" id="AP003565">
    <property type="protein sequence ID" value="BAD37412.1"/>
    <property type="status" value="ALT_SEQ"/>
    <property type="molecule type" value="Genomic_DNA"/>
</dbReference>
<dbReference type="EMBL" id="AP008212">
    <property type="protein sequence ID" value="BAF20151.1"/>
    <property type="status" value="ALT_SEQ"/>
    <property type="molecule type" value="Genomic_DNA"/>
</dbReference>
<dbReference type="EMBL" id="AP014962">
    <property type="protein sequence ID" value="BAS98921.1"/>
    <property type="status" value="ALT_SEQ"/>
    <property type="molecule type" value="Genomic_DNA"/>
</dbReference>
<dbReference type="EMBL" id="CM000143">
    <property type="protein sequence ID" value="EEE66138.1"/>
    <property type="status" value="ALT_SEQ"/>
    <property type="molecule type" value="Genomic_DNA"/>
</dbReference>
<dbReference type="EMBL" id="AK070469">
    <property type="status" value="NOT_ANNOTATED_CDS"/>
    <property type="molecule type" value="mRNA"/>
</dbReference>
<dbReference type="EMBL" id="U57338">
    <property type="protein sequence ID" value="AAB87722.1"/>
    <property type="molecule type" value="mRNA"/>
</dbReference>
<dbReference type="PIR" id="T04146">
    <property type="entry name" value="T04146"/>
</dbReference>
<dbReference type="SMR" id="Q67WQ7"/>
<dbReference type="FunCoup" id="Q67WQ7">
    <property type="interactions" value="1"/>
</dbReference>
<dbReference type="STRING" id="39947.Q67WQ7"/>
<dbReference type="PaxDb" id="39947-Q67WQ7"/>
<dbReference type="KEGG" id="dosa:Os06g0653000"/>
<dbReference type="KEGG" id="osa:4341702"/>
<dbReference type="eggNOG" id="ENOG502S53G">
    <property type="taxonomic scope" value="Eukaryota"/>
</dbReference>
<dbReference type="HOGENOM" id="CLU_017842_2_0_1"/>
<dbReference type="InParanoid" id="Q67WQ7"/>
<dbReference type="OrthoDB" id="408954at2759"/>
<dbReference type="Proteomes" id="UP000000763">
    <property type="component" value="Chromosome 6"/>
</dbReference>
<dbReference type="Proteomes" id="UP000007752">
    <property type="component" value="Chromosome 6"/>
</dbReference>
<dbReference type="Proteomes" id="UP000059680">
    <property type="component" value="Chromosome 6"/>
</dbReference>
<dbReference type="GO" id="GO:0005789">
    <property type="term" value="C:endoplasmic reticulum membrane"/>
    <property type="evidence" value="ECO:0007669"/>
    <property type="project" value="UniProtKB-SubCell"/>
</dbReference>
<dbReference type="GO" id="GO:0071771">
    <property type="term" value="F:aldehyde oxygenase (deformylating) activity"/>
    <property type="evidence" value="ECO:0007669"/>
    <property type="project" value="UniProtKB-EC"/>
</dbReference>
<dbReference type="GO" id="GO:0005506">
    <property type="term" value="F:iron ion binding"/>
    <property type="evidence" value="ECO:0007669"/>
    <property type="project" value="InterPro"/>
</dbReference>
<dbReference type="GO" id="GO:0016491">
    <property type="term" value="F:oxidoreductase activity"/>
    <property type="evidence" value="ECO:0007669"/>
    <property type="project" value="InterPro"/>
</dbReference>
<dbReference type="GO" id="GO:0008610">
    <property type="term" value="P:lipid biosynthetic process"/>
    <property type="evidence" value="ECO:0007669"/>
    <property type="project" value="InterPro"/>
</dbReference>
<dbReference type="GO" id="GO:0009737">
    <property type="term" value="P:response to abscisic acid"/>
    <property type="evidence" value="ECO:0000270"/>
    <property type="project" value="UniProtKB"/>
</dbReference>
<dbReference type="GO" id="GO:0009651">
    <property type="term" value="P:response to salt stress"/>
    <property type="evidence" value="ECO:0000270"/>
    <property type="project" value="UniProtKB"/>
</dbReference>
<dbReference type="InterPro" id="IPR021940">
    <property type="entry name" value="CER1-like_C"/>
</dbReference>
<dbReference type="InterPro" id="IPR006694">
    <property type="entry name" value="Fatty_acid_hydroxylase"/>
</dbReference>
<dbReference type="InterPro" id="IPR036291">
    <property type="entry name" value="NAD(P)-bd_dom_sf"/>
</dbReference>
<dbReference type="InterPro" id="IPR050307">
    <property type="entry name" value="Sterol_Desaturase_Related"/>
</dbReference>
<dbReference type="PANTHER" id="PTHR11863">
    <property type="entry name" value="STEROL DESATURASE"/>
    <property type="match status" value="1"/>
</dbReference>
<dbReference type="Pfam" id="PF12076">
    <property type="entry name" value="CER1-like_C"/>
    <property type="match status" value="1"/>
</dbReference>
<dbReference type="Pfam" id="PF04116">
    <property type="entry name" value="FA_hydroxylase"/>
    <property type="match status" value="1"/>
</dbReference>
<dbReference type="SUPFAM" id="SSF51735">
    <property type="entry name" value="NAD(P)-binding Rossmann-fold domains"/>
    <property type="match status" value="1"/>
</dbReference>
<feature type="chain" id="PRO_0000445872" description="Very-long-chain aldehyde decarbonylase GL1-3">
    <location>
        <begin position="1"/>
        <end position="618"/>
    </location>
</feature>
<feature type="transmembrane region" description="Helical" evidence="2">
    <location>
        <begin position="9"/>
        <end position="29"/>
    </location>
</feature>
<feature type="transmembrane region" description="Helical" evidence="2">
    <location>
        <begin position="46"/>
        <end position="66"/>
    </location>
</feature>
<feature type="transmembrane region" description="Helical" evidence="2">
    <location>
        <begin position="91"/>
        <end position="111"/>
    </location>
</feature>
<feature type="transmembrane region" description="Helical" evidence="2">
    <location>
        <begin position="121"/>
        <end position="141"/>
    </location>
</feature>
<feature type="transmembrane region" description="Helical" evidence="2">
    <location>
        <begin position="174"/>
        <end position="194"/>
    </location>
</feature>
<feature type="transmembrane region" description="Helical" evidence="2">
    <location>
        <begin position="289"/>
        <end position="309"/>
    </location>
</feature>
<feature type="transmembrane region" description="Helical" evidence="2">
    <location>
        <begin position="315"/>
        <end position="335"/>
    </location>
</feature>
<feature type="domain" description="Fatty acid hydroxylase" evidence="2">
    <location>
        <begin position="127"/>
        <end position="267"/>
    </location>
</feature>
<feature type="sequence conflict" description="In Ref. 5; AAB87722." evidence="6" ref="5">
    <original>APLAGAFMAGHGSVS</original>
    <variation>PHLQGLHGGTRLRE</variation>
    <location>
        <begin position="185"/>
        <end position="199"/>
    </location>
</feature>
<feature type="sequence conflict" description="In Ref. 5; AAB87722." evidence="6" ref="5">
    <original>LLFDYLRSMGYSNVEVISHKT</original>
    <variation>SSSTTPVHGVQQRRGHLTQD</variation>
    <location>
        <begin position="206"/>
        <end position="226"/>
    </location>
</feature>
<feature type="sequence conflict" description="In Ref. 5; AAB87722." evidence="6" ref="5">
    <original>L</original>
    <variation>F</variation>
    <location>
        <position position="464"/>
    </location>
</feature>
<accession>Q67WQ7</accession>
<accession>O04693</accession>
<proteinExistence type="evidence at transcript level"/>
<keyword id="KW-0256">Endoplasmic reticulum</keyword>
<keyword id="KW-0456">Lyase</keyword>
<keyword id="KW-0472">Membrane</keyword>
<keyword id="KW-0521">NADP</keyword>
<keyword id="KW-1185">Reference proteome</keyword>
<keyword id="KW-0812">Transmembrane</keyword>
<keyword id="KW-1133">Transmembrane helix</keyword>
<evidence type="ECO:0000250" key="1">
    <source>
        <dbReference type="UniProtKB" id="F4HVY0"/>
    </source>
</evidence>
<evidence type="ECO:0000255" key="2"/>
<evidence type="ECO:0000269" key="3">
    <source>
    </source>
</evidence>
<evidence type="ECO:0000303" key="4">
    <source>
    </source>
</evidence>
<evidence type="ECO:0000303" key="5">
    <source>
    </source>
</evidence>
<evidence type="ECO:0000305" key="6"/>
<evidence type="ECO:0000312" key="7">
    <source>
        <dbReference type="EMBL" id="BAD37412.1"/>
    </source>
</evidence>
<evidence type="ECO:0000312" key="8">
    <source>
        <dbReference type="EMBL" id="BAF20151.1"/>
    </source>
</evidence>
<evidence type="ECO:0000312" key="9">
    <source>
        <dbReference type="EMBL" id="BAS98921.1"/>
    </source>
</evidence>
<evidence type="ECO:0000312" key="10">
    <source>
        <dbReference type="EMBL" id="EEE66138.1"/>
    </source>
</evidence>
<protein>
    <recommendedName>
        <fullName evidence="6">Very-long-chain aldehyde decarbonylase GL1-3</fullName>
        <ecNumber evidence="1">4.1.99.5</ecNumber>
    </recommendedName>
    <alternativeName>
        <fullName evidence="4">Protein GLOSSY 1-3</fullName>
    </alternativeName>
    <alternativeName>
        <fullName evidence="5">Protein GLOSSY l</fullName>
    </alternativeName>
</protein>
<sequence length="618" mass="69812">MAISMASPLSSWPWAFLGSYKYLLYGPVVGKVVQEWREQGRLPLGTSWCLHLILLLALRSLTMLFFTRRRRVVDDGVDFRQIDTEWDWDNMVIMQTLIAAVLVTSRVFPATSDLSAWDLRGWAIAVVLHVAVSEPAFYWAHRALHLGPLFSRYHSLHHSFQATQALTAGFVTPLESLILTLVAWAPLAGAFMAGHGSVSLVYGHILLFDYLRSMGYSNVEVISHKTFQDFPFLRYLIYTPSYLSLHHREKDSNFCLFMPLFDALGGTLNPKSWQLQKEVDLGKNHRVPDFVFLVHVVDVVSSMHVPFAFRACSSLPFATHLVLLPLWPIAFGFMLLQWFCSKTFTVSFYKLRGFLHQTWSVPRYGFQYFIPSAKKGINEMIELAILRADKMGVKVLSLAALNKNEALNGGGTLFVRKHPDLRVRVVHGNTLTAAVILNEIPGDVAEVFLTGATSKLGRAIALYLCRKKIRVLMLTLSTERFMNIQREAPAEFQQYLVQVTKYQAAQNCKTWIVGKWLSPREQRWAPAGTHFHQFVVPPIIGFRRDCTYGKLAAMRLPEDVEGLGTCEYTMGRGVVHACHAGGVVHFLEGWDHHEVGAIDVDRIDAVWNAALRHGLTPA</sequence>